<dbReference type="EMBL" id="CP001120">
    <property type="protein sequence ID" value="ACF68289.1"/>
    <property type="molecule type" value="Genomic_DNA"/>
</dbReference>
<dbReference type="RefSeq" id="WP_001077320.1">
    <property type="nucleotide sequence ID" value="NC_011083.1"/>
</dbReference>
<dbReference type="SMR" id="B4TCJ9"/>
<dbReference type="KEGG" id="seh:SeHA_C4392"/>
<dbReference type="HOGENOM" id="CLU_013430_3_0_6"/>
<dbReference type="Proteomes" id="UP000001866">
    <property type="component" value="Chromosome"/>
</dbReference>
<dbReference type="GO" id="GO:0005886">
    <property type="term" value="C:plasma membrane"/>
    <property type="evidence" value="ECO:0007669"/>
    <property type="project" value="UniProtKB-SubCell"/>
</dbReference>
<dbReference type="GO" id="GO:0015086">
    <property type="term" value="F:cadmium ion transmembrane transporter activity"/>
    <property type="evidence" value="ECO:0007669"/>
    <property type="project" value="UniProtKB-UniRule"/>
</dbReference>
<dbReference type="GO" id="GO:0015093">
    <property type="term" value="F:ferrous iron transmembrane transporter activity"/>
    <property type="evidence" value="ECO:0007669"/>
    <property type="project" value="TreeGrafter"/>
</dbReference>
<dbReference type="GO" id="GO:0046872">
    <property type="term" value="F:metal ion binding"/>
    <property type="evidence" value="ECO:0007669"/>
    <property type="project" value="UniProtKB-KW"/>
</dbReference>
<dbReference type="GO" id="GO:0015341">
    <property type="term" value="F:zinc efflux antiporter activity"/>
    <property type="evidence" value="ECO:0007669"/>
    <property type="project" value="TreeGrafter"/>
</dbReference>
<dbReference type="GO" id="GO:0006882">
    <property type="term" value="P:intracellular zinc ion homeostasis"/>
    <property type="evidence" value="ECO:0007669"/>
    <property type="project" value="TreeGrafter"/>
</dbReference>
<dbReference type="FunFam" id="1.20.1510.10:FF:000001">
    <property type="entry name" value="Ferrous-iron efflux pump FieF"/>
    <property type="match status" value="1"/>
</dbReference>
<dbReference type="FunFam" id="3.30.70.1350:FF:000002">
    <property type="entry name" value="Ferrous-iron efflux pump FieF"/>
    <property type="match status" value="1"/>
</dbReference>
<dbReference type="Gene3D" id="1.20.1510.10">
    <property type="entry name" value="Cation efflux protein transmembrane domain"/>
    <property type="match status" value="1"/>
</dbReference>
<dbReference type="Gene3D" id="3.30.70.1350">
    <property type="entry name" value="Cation efflux protein, cytoplasmic domain"/>
    <property type="match status" value="1"/>
</dbReference>
<dbReference type="HAMAP" id="MF_01425">
    <property type="entry name" value="Cation_efflux_FieF"/>
    <property type="match status" value="1"/>
</dbReference>
<dbReference type="InterPro" id="IPR002524">
    <property type="entry name" value="Cation_efflux"/>
</dbReference>
<dbReference type="InterPro" id="IPR027470">
    <property type="entry name" value="Cation_efflux_CTD"/>
</dbReference>
<dbReference type="InterPro" id="IPR036837">
    <property type="entry name" value="Cation_efflux_CTD_sf"/>
</dbReference>
<dbReference type="InterPro" id="IPR023783">
    <property type="entry name" value="Cation_efflux_FieF"/>
</dbReference>
<dbReference type="InterPro" id="IPR027469">
    <property type="entry name" value="Cation_efflux_TMD_sf"/>
</dbReference>
<dbReference type="InterPro" id="IPR050291">
    <property type="entry name" value="CDF_Transporter"/>
</dbReference>
<dbReference type="NCBIfam" id="TIGR01297">
    <property type="entry name" value="CDF"/>
    <property type="match status" value="1"/>
</dbReference>
<dbReference type="NCBIfam" id="NF007064">
    <property type="entry name" value="PRK09509.1"/>
    <property type="match status" value="1"/>
</dbReference>
<dbReference type="PANTHER" id="PTHR43840:SF41">
    <property type="entry name" value="CATION-EFFLUX PUMP FIEF"/>
    <property type="match status" value="1"/>
</dbReference>
<dbReference type="PANTHER" id="PTHR43840">
    <property type="entry name" value="MITOCHONDRIAL METAL TRANSPORTER 1-RELATED"/>
    <property type="match status" value="1"/>
</dbReference>
<dbReference type="Pfam" id="PF01545">
    <property type="entry name" value="Cation_efflux"/>
    <property type="match status" value="1"/>
</dbReference>
<dbReference type="Pfam" id="PF16916">
    <property type="entry name" value="ZT_dimer"/>
    <property type="match status" value="1"/>
</dbReference>
<dbReference type="SUPFAM" id="SSF160240">
    <property type="entry name" value="Cation efflux protein cytoplasmic domain-like"/>
    <property type="match status" value="1"/>
</dbReference>
<dbReference type="SUPFAM" id="SSF161111">
    <property type="entry name" value="Cation efflux protein transmembrane domain-like"/>
    <property type="match status" value="1"/>
</dbReference>
<gene>
    <name evidence="1" type="primary">fieF</name>
    <name type="ordered locus">SeHA_C4392</name>
</gene>
<organism>
    <name type="scientific">Salmonella heidelberg (strain SL476)</name>
    <dbReference type="NCBI Taxonomy" id="454169"/>
    <lineage>
        <taxon>Bacteria</taxon>
        <taxon>Pseudomonadati</taxon>
        <taxon>Pseudomonadota</taxon>
        <taxon>Gammaproteobacteria</taxon>
        <taxon>Enterobacterales</taxon>
        <taxon>Enterobacteriaceae</taxon>
        <taxon>Salmonella</taxon>
    </lineage>
</organism>
<name>FIEF_SALHS</name>
<comment type="function">
    <text evidence="1">Divalent metal cation transporter which exports Zn(2+), Cd(2+) and possibly Fe(2+). May be involved in zinc and iron detoxification by efflux.</text>
</comment>
<comment type="catalytic activity">
    <reaction evidence="1">
        <text>Zn(2+)(in) + H(+)(out) = Zn(2+)(out) + H(+)(in)</text>
        <dbReference type="Rhea" id="RHEA:28839"/>
        <dbReference type="ChEBI" id="CHEBI:15378"/>
        <dbReference type="ChEBI" id="CHEBI:29105"/>
    </reaction>
</comment>
<comment type="catalytic activity">
    <reaction evidence="1">
        <text>Cd(2+)(in) + H(+)(out) = Cd(2+)(out) + H(+)(in)</text>
        <dbReference type="Rhea" id="RHEA:28739"/>
        <dbReference type="ChEBI" id="CHEBI:15378"/>
        <dbReference type="ChEBI" id="CHEBI:48775"/>
    </reaction>
</comment>
<comment type="catalytic activity">
    <reaction evidence="1">
        <text>Fe(2+)(in) + H(+)(out) = Fe(2+)(out) + H(+)(in)</text>
        <dbReference type="Rhea" id="RHEA:29439"/>
        <dbReference type="ChEBI" id="CHEBI:15378"/>
        <dbReference type="ChEBI" id="CHEBI:29033"/>
    </reaction>
</comment>
<comment type="subunit">
    <text evidence="1">Homodimer.</text>
</comment>
<comment type="subcellular location">
    <subcellularLocation>
        <location evidence="1">Cell inner membrane</location>
        <topology evidence="1">Multi-pass membrane protein</topology>
    </subcellularLocation>
</comment>
<comment type="similarity">
    <text evidence="1">Belongs to the cation diffusion facilitator (CDF) transporter (TC 2.A.4) family. FieF subfamily.</text>
</comment>
<protein>
    <recommendedName>
        <fullName evidence="1">Cation-efflux pump FieF</fullName>
    </recommendedName>
</protein>
<feature type="chain" id="PRO_1000145703" description="Cation-efflux pump FieF">
    <location>
        <begin position="1"/>
        <end position="300"/>
    </location>
</feature>
<feature type="transmembrane region" description="Helical" evidence="1">
    <location>
        <begin position="24"/>
        <end position="44"/>
    </location>
</feature>
<feature type="transmembrane region" description="Helical" evidence="1">
    <location>
        <begin position="82"/>
        <end position="102"/>
    </location>
</feature>
<feature type="transmembrane region" description="Helical" evidence="1">
    <location>
        <begin position="114"/>
        <end position="134"/>
    </location>
</feature>
<feature type="transmembrane region" description="Helical" evidence="1">
    <location>
        <begin position="156"/>
        <end position="176"/>
    </location>
</feature>
<feature type="transmembrane region" description="Helical" evidence="1">
    <location>
        <begin position="178"/>
        <end position="198"/>
    </location>
</feature>
<feature type="binding site" evidence="1">
    <location>
        <position position="45"/>
    </location>
    <ligand>
        <name>Zn(2+)</name>
        <dbReference type="ChEBI" id="CHEBI:29105"/>
    </ligand>
</feature>
<feature type="binding site" evidence="1">
    <location>
        <position position="49"/>
    </location>
    <ligand>
        <name>Zn(2+)</name>
        <dbReference type="ChEBI" id="CHEBI:29105"/>
    </ligand>
</feature>
<feature type="binding site" evidence="1">
    <location>
        <position position="153"/>
    </location>
    <ligand>
        <name>Zn(2+)</name>
        <dbReference type="ChEBI" id="CHEBI:29105"/>
    </ligand>
</feature>
<feature type="binding site" evidence="1">
    <location>
        <position position="157"/>
    </location>
    <ligand>
        <name>Zn(2+)</name>
        <dbReference type="ChEBI" id="CHEBI:29105"/>
    </ligand>
</feature>
<proteinExistence type="inferred from homology"/>
<sequence length="300" mass="32974">MNQTYGRLVSRAAIAATAMASALLLIKIFAWWYTGSVSILAALVDSLVDIAASLTNLLVVRYSLQPADDEHTFGHGKAESLAALAQSMFISGSALFLFLTSIQNLIKPTPMNDPGVGIGVTVIALICTIILVTFQRWVVRKTQSQAVRADMLHYQSDVMMNGAILIALGLSWYGWHRADALFALGIGIYILYSALRMGYEAVQSLLDRALPDAERQEIIDIVTSWPGVSGAHDLRTRQSGPTRFIQIHLEMEDNLPLVQAHFVADQVEQAILQRFPGSDVIIHQDPCSVVPREGRKFELV</sequence>
<evidence type="ECO:0000255" key="1">
    <source>
        <dbReference type="HAMAP-Rule" id="MF_01425"/>
    </source>
</evidence>
<keyword id="KW-0997">Cell inner membrane</keyword>
<keyword id="KW-1003">Cell membrane</keyword>
<keyword id="KW-0406">Ion transport</keyword>
<keyword id="KW-0408">Iron</keyword>
<keyword id="KW-0410">Iron transport</keyword>
<keyword id="KW-0472">Membrane</keyword>
<keyword id="KW-0479">Metal-binding</keyword>
<keyword id="KW-0812">Transmembrane</keyword>
<keyword id="KW-1133">Transmembrane helix</keyword>
<keyword id="KW-0813">Transport</keyword>
<keyword id="KW-0862">Zinc</keyword>
<keyword id="KW-0864">Zinc transport</keyword>
<reference key="1">
    <citation type="journal article" date="2011" name="J. Bacteriol.">
        <title>Comparative genomics of 28 Salmonella enterica isolates: evidence for CRISPR-mediated adaptive sublineage evolution.</title>
        <authorList>
            <person name="Fricke W.F."/>
            <person name="Mammel M.K."/>
            <person name="McDermott P.F."/>
            <person name="Tartera C."/>
            <person name="White D.G."/>
            <person name="Leclerc J.E."/>
            <person name="Ravel J."/>
            <person name="Cebula T.A."/>
        </authorList>
    </citation>
    <scope>NUCLEOTIDE SEQUENCE [LARGE SCALE GENOMIC DNA]</scope>
    <source>
        <strain>SL476</strain>
    </source>
</reference>
<accession>B4TCJ9</accession>